<keyword id="KW-0256">Endoplasmic reticulum</keyword>
<keyword id="KW-0325">Glycoprotein</keyword>
<keyword id="KW-0328">Glycosyltransferase</keyword>
<keyword id="KW-0337">GPI-anchor biosynthesis</keyword>
<keyword id="KW-0472">Membrane</keyword>
<keyword id="KW-1185">Reference proteome</keyword>
<keyword id="KW-0808">Transferase</keyword>
<keyword id="KW-0812">Transmembrane</keyword>
<keyword id="KW-1133">Transmembrane helix</keyword>
<organism>
    <name type="scientific">Eremothecium gossypii (strain ATCC 10895 / CBS 109.51 / FGSC 9923 / NRRL Y-1056)</name>
    <name type="common">Yeast</name>
    <name type="synonym">Ashbya gossypii</name>
    <dbReference type="NCBI Taxonomy" id="284811"/>
    <lineage>
        <taxon>Eukaryota</taxon>
        <taxon>Fungi</taxon>
        <taxon>Dikarya</taxon>
        <taxon>Ascomycota</taxon>
        <taxon>Saccharomycotina</taxon>
        <taxon>Saccharomycetes</taxon>
        <taxon>Saccharomycetales</taxon>
        <taxon>Saccharomycetaceae</taxon>
        <taxon>Eremothecium</taxon>
    </lineage>
</organism>
<proteinExistence type="inferred from homology"/>
<feature type="chain" id="PRO_0000246271" description="GPI mannosyltransferase 4">
    <location>
        <begin position="1"/>
        <end position="498"/>
    </location>
</feature>
<feature type="transmembrane region" description="Helical" evidence="2">
    <location>
        <begin position="4"/>
        <end position="24"/>
    </location>
</feature>
<feature type="transmembrane region" description="Helical" evidence="2">
    <location>
        <begin position="60"/>
        <end position="80"/>
    </location>
</feature>
<feature type="transmembrane region" description="Helical" evidence="2">
    <location>
        <begin position="118"/>
        <end position="134"/>
    </location>
</feature>
<feature type="transmembrane region" description="Helical" evidence="2">
    <location>
        <begin position="135"/>
        <end position="155"/>
    </location>
</feature>
<feature type="transmembrane region" description="Helical" evidence="2">
    <location>
        <begin position="169"/>
        <end position="189"/>
    </location>
</feature>
<feature type="transmembrane region" description="Helical" evidence="2">
    <location>
        <begin position="208"/>
        <end position="228"/>
    </location>
</feature>
<feature type="transmembrane region" description="Helical" evidence="2">
    <location>
        <begin position="261"/>
        <end position="281"/>
    </location>
</feature>
<feature type="transmembrane region" description="Helical" evidence="2">
    <location>
        <begin position="286"/>
        <end position="303"/>
    </location>
</feature>
<feature type="transmembrane region" description="Helical" evidence="2">
    <location>
        <begin position="332"/>
        <end position="352"/>
    </location>
</feature>
<feature type="glycosylation site" description="N-linked (GlcNAc...) asparagine" evidence="2">
    <location>
        <position position="429"/>
    </location>
</feature>
<accession>Q753C1</accession>
<reference key="1">
    <citation type="journal article" date="2004" name="Science">
        <title>The Ashbya gossypii genome as a tool for mapping the ancient Saccharomyces cerevisiae genome.</title>
        <authorList>
            <person name="Dietrich F.S."/>
            <person name="Voegeli S."/>
            <person name="Brachat S."/>
            <person name="Lerch A."/>
            <person name="Gates K."/>
            <person name="Steiner S."/>
            <person name="Mohr C."/>
            <person name="Poehlmann R."/>
            <person name="Luedi P."/>
            <person name="Choi S."/>
            <person name="Wing R.A."/>
            <person name="Flavier A."/>
            <person name="Gaffney T.D."/>
            <person name="Philippsen P."/>
        </authorList>
    </citation>
    <scope>NUCLEOTIDE SEQUENCE [LARGE SCALE GENOMIC DNA]</scope>
    <source>
        <strain>ATCC 10895 / CBS 109.51 / FGSC 9923 / NRRL Y-1056</strain>
    </source>
</reference>
<reference key="2">
    <citation type="journal article" date="2013" name="G3 (Bethesda)">
        <title>Genomes of Ashbya fungi isolated from insects reveal four mating-type loci, numerous translocations, lack of transposons, and distinct gene duplications.</title>
        <authorList>
            <person name="Dietrich F.S."/>
            <person name="Voegeli S."/>
            <person name="Kuo S."/>
            <person name="Philippsen P."/>
        </authorList>
    </citation>
    <scope>GENOME REANNOTATION</scope>
    <scope>SEQUENCE REVISION TO 245-264</scope>
    <source>
        <strain>ATCC 10895 / CBS 109.51 / FGSC 9923 / NRRL Y-1056</strain>
    </source>
</reference>
<evidence type="ECO:0000250" key="1"/>
<evidence type="ECO:0000255" key="2"/>
<evidence type="ECO:0000305" key="3"/>
<name>SMP3_EREGS</name>
<protein>
    <recommendedName>
        <fullName>GPI mannosyltransferase 4</fullName>
        <ecNumber>2.4.1.-</ecNumber>
    </recommendedName>
    <alternativeName>
        <fullName>GPI mannosyltransferase IV</fullName>
        <shortName>GPI-MT-IV</shortName>
    </alternativeName>
</protein>
<gene>
    <name type="primary">SMP3</name>
    <name type="ordered locus">AFR395C</name>
</gene>
<sequence>MRLAVIRYIWLLVALLVALEPAYVHPDEHMQSVEVMMQKIFGLRGTVPWEFQPEYAARSFAPLWIFMGPALVAARLFNAGPRVVLGLLRIQGYFLYVSLTRVAVELVGRTKLRRSMAAFLLSTTYVVGAFQSHTFSNSIETLLAVAAVGLLEVVIADGRAGHRHVRISGVLGFLIALGLFNRVTFAGYLGLPCIVAFWQFYRRQWRSLAALLLCFLLTSGACIWIDTLSYGTSEWVITPLNNLLYNMDEENLAQHGLHPRYTHILVNLPMLLGPGLLFALGGIQRLSLPLLSCVSGVATLSLFKHQEARFLLPVVPLFLMSVDLTKLRTVSLTLTLKLWLAFNGLMVVIMGVGHQRGVITALHQLREEPIGVQVWWKTYSPPTWVLMNEALTVSTTNFVGDDERIDEVPLDVTRNHVIDLKGCNIELLNHTLSQFIAAGSKVHLIVPDSVAKKTALLTKRYGFDIHREFRTLVHLDLDHLDWSEPSSFTPGLSIYTVT</sequence>
<comment type="function">
    <text evidence="1">Alpha-1,2-mannosyltransferase involved in glycosylphosphatidylinositol-anchor biosynthesis. Transfers a fourth mannose to trimannosyl-GPIs during GPI precursor assembly. The presence of a fourth mannose in GPI is essential in fungi (By similarity).</text>
</comment>
<comment type="pathway">
    <text>Glycolipid biosynthesis; glycosylphosphatidylinositol-anchor biosynthesis.</text>
</comment>
<comment type="subcellular location">
    <subcellularLocation>
        <location evidence="1">Endoplasmic reticulum membrane</location>
        <topology evidence="1">Multi-pass membrane protein</topology>
    </subcellularLocation>
</comment>
<comment type="similarity">
    <text evidence="3">Belongs to the glycosyltransferase 22 family. PIGZ subfamily.</text>
</comment>
<comment type="sequence caution" evidence="3">
    <conflict type="erroneous initiation">
        <sequence resource="EMBL-CDS" id="AAS53766"/>
    </conflict>
    <text>Extended N-terminus.</text>
</comment>
<dbReference type="EC" id="2.4.1.-"/>
<dbReference type="EMBL" id="AE016819">
    <property type="protein sequence ID" value="AAS53766.2"/>
    <property type="status" value="ALT_INIT"/>
    <property type="molecule type" value="Genomic_DNA"/>
</dbReference>
<dbReference type="RefSeq" id="NP_985942.2">
    <property type="nucleotide sequence ID" value="NM_211297.2"/>
</dbReference>
<dbReference type="FunCoup" id="Q753C1">
    <property type="interactions" value="52"/>
</dbReference>
<dbReference type="STRING" id="284811.Q753C1"/>
<dbReference type="CAZy" id="GT22">
    <property type="family name" value="Glycosyltransferase Family 22"/>
</dbReference>
<dbReference type="GlyCosmos" id="Q753C1">
    <property type="glycosylation" value="1 site, No reported glycans"/>
</dbReference>
<dbReference type="GeneID" id="4622214"/>
<dbReference type="KEGG" id="ago:AGOS_AFR395C"/>
<dbReference type="eggNOG" id="KOG4123">
    <property type="taxonomic scope" value="Eukaryota"/>
</dbReference>
<dbReference type="InParanoid" id="Q753C1"/>
<dbReference type="OrthoDB" id="10066429at2759"/>
<dbReference type="UniPathway" id="UPA00196"/>
<dbReference type="Proteomes" id="UP000000591">
    <property type="component" value="Chromosome VI"/>
</dbReference>
<dbReference type="GO" id="GO:0005789">
    <property type="term" value="C:endoplasmic reticulum membrane"/>
    <property type="evidence" value="ECO:0000318"/>
    <property type="project" value="GO_Central"/>
</dbReference>
<dbReference type="GO" id="GO:0000026">
    <property type="term" value="F:alpha-1,2-mannosyltransferase activity"/>
    <property type="evidence" value="ECO:0000318"/>
    <property type="project" value="GO_Central"/>
</dbReference>
<dbReference type="GO" id="GO:0006506">
    <property type="term" value="P:GPI anchor biosynthetic process"/>
    <property type="evidence" value="ECO:0000318"/>
    <property type="project" value="GO_Central"/>
</dbReference>
<dbReference type="InterPro" id="IPR005599">
    <property type="entry name" value="GPI_mannosylTrfase"/>
</dbReference>
<dbReference type="PANTHER" id="PTHR22760">
    <property type="entry name" value="GLYCOSYLTRANSFERASE"/>
    <property type="match status" value="1"/>
</dbReference>
<dbReference type="PANTHER" id="PTHR22760:SF3">
    <property type="entry name" value="GPI MANNOSYLTRANSFERASE 4"/>
    <property type="match status" value="1"/>
</dbReference>
<dbReference type="Pfam" id="PF03901">
    <property type="entry name" value="Glyco_transf_22"/>
    <property type="match status" value="1"/>
</dbReference>